<reference key="1">
    <citation type="submission" date="2007-05" db="EMBL/GenBank/DDBJ databases">
        <title>Complete sequence of chromosome of Psychrobacter sp. PRwf-1.</title>
        <authorList>
            <consortium name="US DOE Joint Genome Institute"/>
            <person name="Copeland A."/>
            <person name="Lucas S."/>
            <person name="Lapidus A."/>
            <person name="Barry K."/>
            <person name="Detter J.C."/>
            <person name="Glavina del Rio T."/>
            <person name="Hammon N."/>
            <person name="Israni S."/>
            <person name="Dalin E."/>
            <person name="Tice H."/>
            <person name="Pitluck S."/>
            <person name="Chain P."/>
            <person name="Malfatti S."/>
            <person name="Shin M."/>
            <person name="Vergez L."/>
            <person name="Schmutz J."/>
            <person name="Larimer F."/>
            <person name="Land M."/>
            <person name="Hauser L."/>
            <person name="Kyrpides N."/>
            <person name="Kim E."/>
            <person name="Tiedje J."/>
            <person name="Richardson P."/>
        </authorList>
    </citation>
    <scope>NUCLEOTIDE SEQUENCE [LARGE SCALE GENOMIC DNA]</scope>
    <source>
        <strain>PRwf-1</strain>
    </source>
</reference>
<comment type="function">
    <text evidence="1">Binds to the 23S rRNA.</text>
</comment>
<comment type="similarity">
    <text evidence="1">Belongs to the bacterial ribosomal protein bL9 family.</text>
</comment>
<proteinExistence type="inferred from homology"/>
<keyword id="KW-0687">Ribonucleoprotein</keyword>
<keyword id="KW-0689">Ribosomal protein</keyword>
<keyword id="KW-0694">RNA-binding</keyword>
<keyword id="KW-0699">rRNA-binding</keyword>
<dbReference type="EMBL" id="CP000713">
    <property type="protein sequence ID" value="ABQ94582.1"/>
    <property type="molecule type" value="Genomic_DNA"/>
</dbReference>
<dbReference type="SMR" id="A5WFZ1"/>
<dbReference type="STRING" id="349106.PsycPRwf_1642"/>
<dbReference type="KEGG" id="prw:PsycPRwf_1642"/>
<dbReference type="eggNOG" id="COG0359">
    <property type="taxonomic scope" value="Bacteria"/>
</dbReference>
<dbReference type="HOGENOM" id="CLU_078938_4_1_6"/>
<dbReference type="GO" id="GO:1990904">
    <property type="term" value="C:ribonucleoprotein complex"/>
    <property type="evidence" value="ECO:0007669"/>
    <property type="project" value="UniProtKB-KW"/>
</dbReference>
<dbReference type="GO" id="GO:0005840">
    <property type="term" value="C:ribosome"/>
    <property type="evidence" value="ECO:0007669"/>
    <property type="project" value="UniProtKB-KW"/>
</dbReference>
<dbReference type="GO" id="GO:0019843">
    <property type="term" value="F:rRNA binding"/>
    <property type="evidence" value="ECO:0007669"/>
    <property type="project" value="UniProtKB-UniRule"/>
</dbReference>
<dbReference type="GO" id="GO:0003735">
    <property type="term" value="F:structural constituent of ribosome"/>
    <property type="evidence" value="ECO:0007669"/>
    <property type="project" value="InterPro"/>
</dbReference>
<dbReference type="GO" id="GO:0006412">
    <property type="term" value="P:translation"/>
    <property type="evidence" value="ECO:0007669"/>
    <property type="project" value="UniProtKB-UniRule"/>
</dbReference>
<dbReference type="Gene3D" id="3.10.430.100">
    <property type="entry name" value="Ribosomal protein L9, C-terminal domain"/>
    <property type="match status" value="1"/>
</dbReference>
<dbReference type="Gene3D" id="3.40.5.10">
    <property type="entry name" value="Ribosomal protein L9, N-terminal domain"/>
    <property type="match status" value="1"/>
</dbReference>
<dbReference type="HAMAP" id="MF_00503">
    <property type="entry name" value="Ribosomal_bL9"/>
    <property type="match status" value="1"/>
</dbReference>
<dbReference type="InterPro" id="IPR000244">
    <property type="entry name" value="Ribosomal_bL9"/>
</dbReference>
<dbReference type="InterPro" id="IPR009027">
    <property type="entry name" value="Ribosomal_bL9/RNase_H1_N"/>
</dbReference>
<dbReference type="InterPro" id="IPR020594">
    <property type="entry name" value="Ribosomal_bL9_bac/chp"/>
</dbReference>
<dbReference type="InterPro" id="IPR020069">
    <property type="entry name" value="Ribosomal_bL9_C"/>
</dbReference>
<dbReference type="InterPro" id="IPR036791">
    <property type="entry name" value="Ribosomal_bL9_C_sf"/>
</dbReference>
<dbReference type="InterPro" id="IPR020070">
    <property type="entry name" value="Ribosomal_bL9_N"/>
</dbReference>
<dbReference type="InterPro" id="IPR036935">
    <property type="entry name" value="Ribosomal_bL9_N_sf"/>
</dbReference>
<dbReference type="NCBIfam" id="TIGR00158">
    <property type="entry name" value="L9"/>
    <property type="match status" value="1"/>
</dbReference>
<dbReference type="PANTHER" id="PTHR21368">
    <property type="entry name" value="50S RIBOSOMAL PROTEIN L9"/>
    <property type="match status" value="1"/>
</dbReference>
<dbReference type="Pfam" id="PF03948">
    <property type="entry name" value="Ribosomal_L9_C"/>
    <property type="match status" value="1"/>
</dbReference>
<dbReference type="Pfam" id="PF01281">
    <property type="entry name" value="Ribosomal_L9_N"/>
    <property type="match status" value="1"/>
</dbReference>
<dbReference type="SUPFAM" id="SSF55658">
    <property type="entry name" value="L9 N-domain-like"/>
    <property type="match status" value="1"/>
</dbReference>
<dbReference type="SUPFAM" id="SSF55653">
    <property type="entry name" value="Ribosomal protein L9 C-domain"/>
    <property type="match status" value="1"/>
</dbReference>
<dbReference type="PROSITE" id="PS00651">
    <property type="entry name" value="RIBOSOMAL_L9"/>
    <property type="match status" value="1"/>
</dbReference>
<gene>
    <name evidence="1" type="primary">rplI</name>
    <name type="ordered locus">PsycPRwf_1642</name>
</gene>
<feature type="chain" id="PRO_1000072450" description="Large ribosomal subunit protein bL9">
    <location>
        <begin position="1"/>
        <end position="164"/>
    </location>
</feature>
<protein>
    <recommendedName>
        <fullName evidence="1">Large ribosomal subunit protein bL9</fullName>
    </recommendedName>
    <alternativeName>
        <fullName evidence="2">50S ribosomal protein L9</fullName>
    </alternativeName>
</protein>
<organism>
    <name type="scientific">Psychrobacter sp. (strain PRwf-1)</name>
    <dbReference type="NCBI Taxonomy" id="349106"/>
    <lineage>
        <taxon>Bacteria</taxon>
        <taxon>Pseudomonadati</taxon>
        <taxon>Pseudomonadota</taxon>
        <taxon>Gammaproteobacteria</taxon>
        <taxon>Moraxellales</taxon>
        <taxon>Moraxellaceae</taxon>
        <taxon>Psychrobacter</taxon>
    </lineage>
</organism>
<name>RL9_PSYWF</name>
<sequence>MQVILLQRIVNLGKLGETVDVKSGYGRNYLIPQGKALPATPANVEKFEARRAELEAIEAEELAAANKRAEALTDVNVIMRAKSGEDGKLFGSIGTRDIADALTKSGLEVDRAEVKLPEGTLRQVGEYNVDIQLHHDIFASILVTILSEDGDVEAAQQEAEEDAE</sequence>
<accession>A5WFZ1</accession>
<evidence type="ECO:0000255" key="1">
    <source>
        <dbReference type="HAMAP-Rule" id="MF_00503"/>
    </source>
</evidence>
<evidence type="ECO:0000305" key="2"/>